<accession>Q9FH06</accession>
<comment type="function">
    <text evidence="1">Probable carboxypeptidase.</text>
</comment>
<comment type="subcellular location">
    <subcellularLocation>
        <location evidence="5">Secreted</location>
    </subcellularLocation>
</comment>
<comment type="tissue specificity">
    <text evidence="4">Expressed in flowers.</text>
</comment>
<comment type="similarity">
    <text evidence="5">Belongs to the peptidase S10 family.</text>
</comment>
<keyword id="KW-0121">Carboxypeptidase</keyword>
<keyword id="KW-1015">Disulfide bond</keyword>
<keyword id="KW-0325">Glycoprotein</keyword>
<keyword id="KW-0378">Hydrolase</keyword>
<keyword id="KW-0645">Protease</keyword>
<keyword id="KW-1185">Reference proteome</keyword>
<keyword id="KW-0964">Secreted</keyword>
<keyword id="KW-0732">Signal</keyword>
<evidence type="ECO:0000250" key="1"/>
<evidence type="ECO:0000255" key="2"/>
<evidence type="ECO:0000255" key="3">
    <source>
        <dbReference type="PROSITE-ProRule" id="PRU10074"/>
    </source>
</evidence>
<evidence type="ECO:0000269" key="4">
    <source>
    </source>
</evidence>
<evidence type="ECO:0000305" key="5"/>
<protein>
    <recommendedName>
        <fullName>Serine carboxypeptidase-like 41</fullName>
        <ecNumber>3.4.16.-</ecNumber>
    </recommendedName>
</protein>
<reference key="1">
    <citation type="journal article" date="2000" name="DNA Res.">
        <title>Structural analysis of Arabidopsis thaliana chromosome 5. X. Sequence features of the regions of 3,076,755 bp covered by sixty P1 and TAC clones.</title>
        <authorList>
            <person name="Sato S."/>
            <person name="Nakamura Y."/>
            <person name="Kaneko T."/>
            <person name="Katoh T."/>
            <person name="Asamizu E."/>
            <person name="Kotani H."/>
            <person name="Tabata S."/>
        </authorList>
    </citation>
    <scope>NUCLEOTIDE SEQUENCE [LARGE SCALE GENOMIC DNA]</scope>
    <source>
        <strain>cv. Columbia</strain>
    </source>
</reference>
<reference key="2">
    <citation type="journal article" date="2017" name="Plant J.">
        <title>Araport11: a complete reannotation of the Arabidopsis thaliana reference genome.</title>
        <authorList>
            <person name="Cheng C.Y."/>
            <person name="Krishnakumar V."/>
            <person name="Chan A.P."/>
            <person name="Thibaud-Nissen F."/>
            <person name="Schobel S."/>
            <person name="Town C.D."/>
        </authorList>
    </citation>
    <scope>GENOME REANNOTATION</scope>
    <source>
        <strain>cv. Columbia</strain>
    </source>
</reference>
<reference key="3">
    <citation type="journal article" date="2003" name="Science">
        <title>Empirical analysis of transcriptional activity in the Arabidopsis genome.</title>
        <authorList>
            <person name="Yamada K."/>
            <person name="Lim J."/>
            <person name="Dale J.M."/>
            <person name="Chen H."/>
            <person name="Shinn P."/>
            <person name="Palm C.J."/>
            <person name="Southwick A.M."/>
            <person name="Wu H.C."/>
            <person name="Kim C.J."/>
            <person name="Nguyen M."/>
            <person name="Pham P.K."/>
            <person name="Cheuk R.F."/>
            <person name="Karlin-Newmann G."/>
            <person name="Liu S.X."/>
            <person name="Lam B."/>
            <person name="Sakano H."/>
            <person name="Wu T."/>
            <person name="Yu G."/>
            <person name="Miranda M."/>
            <person name="Quach H.L."/>
            <person name="Tripp M."/>
            <person name="Chang C.H."/>
            <person name="Lee J.M."/>
            <person name="Toriumi M.J."/>
            <person name="Chan M.M."/>
            <person name="Tang C.C."/>
            <person name="Onodera C.S."/>
            <person name="Deng J.M."/>
            <person name="Akiyama K."/>
            <person name="Ansari Y."/>
            <person name="Arakawa T."/>
            <person name="Banh J."/>
            <person name="Banno F."/>
            <person name="Bowser L."/>
            <person name="Brooks S.Y."/>
            <person name="Carninci P."/>
            <person name="Chao Q."/>
            <person name="Choy N."/>
            <person name="Enju A."/>
            <person name="Goldsmith A.D."/>
            <person name="Gurjal M."/>
            <person name="Hansen N.F."/>
            <person name="Hayashizaki Y."/>
            <person name="Johnson-Hopson C."/>
            <person name="Hsuan V.W."/>
            <person name="Iida K."/>
            <person name="Karnes M."/>
            <person name="Khan S."/>
            <person name="Koesema E."/>
            <person name="Ishida J."/>
            <person name="Jiang P.X."/>
            <person name="Jones T."/>
            <person name="Kawai J."/>
            <person name="Kamiya A."/>
            <person name="Meyers C."/>
            <person name="Nakajima M."/>
            <person name="Narusaka M."/>
            <person name="Seki M."/>
            <person name="Sakurai T."/>
            <person name="Satou M."/>
            <person name="Tamse R."/>
            <person name="Vaysberg M."/>
            <person name="Wallender E.K."/>
            <person name="Wong C."/>
            <person name="Yamamura Y."/>
            <person name="Yuan S."/>
            <person name="Shinozaki K."/>
            <person name="Davis R.W."/>
            <person name="Theologis A."/>
            <person name="Ecker J.R."/>
        </authorList>
    </citation>
    <scope>NUCLEOTIDE SEQUENCE [LARGE SCALE MRNA]</scope>
    <source>
        <strain>cv. Columbia</strain>
    </source>
</reference>
<reference key="4">
    <citation type="journal article" date="2005" name="Plant Physiol.">
        <title>An expression and bioinformatics analysis of the Arabidopsis serine carboxypeptidase-like gene family.</title>
        <authorList>
            <person name="Fraser C.M."/>
            <person name="Rider L.W."/>
            <person name="Chapple C."/>
        </authorList>
    </citation>
    <scope>GENE FAMILY</scope>
    <scope>TISSUE SPECIFICITY</scope>
    <scope>NOMENCLATURE</scope>
</reference>
<gene>
    <name type="primary">SCPL41</name>
    <name type="ordered locus">At5g42230</name>
    <name type="ORF">K5J14.3</name>
</gene>
<organism>
    <name type="scientific">Arabidopsis thaliana</name>
    <name type="common">Mouse-ear cress</name>
    <dbReference type="NCBI Taxonomy" id="3702"/>
    <lineage>
        <taxon>Eukaryota</taxon>
        <taxon>Viridiplantae</taxon>
        <taxon>Streptophyta</taxon>
        <taxon>Embryophyta</taxon>
        <taxon>Tracheophyta</taxon>
        <taxon>Spermatophyta</taxon>
        <taxon>Magnoliopsida</taxon>
        <taxon>eudicotyledons</taxon>
        <taxon>Gunneridae</taxon>
        <taxon>Pentapetalae</taxon>
        <taxon>rosids</taxon>
        <taxon>malvids</taxon>
        <taxon>Brassicales</taxon>
        <taxon>Brassicaceae</taxon>
        <taxon>Camelineae</taxon>
        <taxon>Arabidopsis</taxon>
    </lineage>
</organism>
<name>SCP41_ARATH</name>
<feature type="signal peptide" evidence="2">
    <location>
        <begin position="1"/>
        <end position="20"/>
    </location>
</feature>
<feature type="chain" id="PRO_0000274656" description="Serine carboxypeptidase-like 41">
    <location>
        <begin position="21"/>
        <end position="469"/>
    </location>
</feature>
<feature type="active site" evidence="3">
    <location>
        <position position="175"/>
    </location>
</feature>
<feature type="active site" evidence="3">
    <location>
        <position position="379"/>
    </location>
</feature>
<feature type="active site" evidence="3">
    <location>
        <position position="436"/>
    </location>
</feature>
<feature type="glycosylation site" description="N-linked (GlcNAc...) asparagine" evidence="2">
    <location>
        <position position="134"/>
    </location>
</feature>
<feature type="glycosylation site" description="N-linked (GlcNAc...) asparagine" evidence="2">
    <location>
        <position position="255"/>
    </location>
</feature>
<feature type="glycosylation site" description="N-linked (GlcNAc...) asparagine" evidence="2">
    <location>
        <position position="331"/>
    </location>
</feature>
<feature type="glycosylation site" description="N-linked (GlcNAc...) asparagine" evidence="2">
    <location>
        <position position="347"/>
    </location>
</feature>
<feature type="glycosylation site" description="N-linked (GlcNAc...) asparagine" evidence="2">
    <location>
        <position position="461"/>
    </location>
</feature>
<feature type="disulfide bond" evidence="1">
    <location>
        <begin position="83"/>
        <end position="342"/>
    </location>
</feature>
<feature type="disulfide bond" evidence="1">
    <location>
        <begin position="243"/>
        <end position="260"/>
    </location>
</feature>
<feature type="disulfide bond" evidence="1">
    <location>
        <begin position="285"/>
        <end position="310"/>
    </location>
</feature>
<dbReference type="EC" id="3.4.16.-"/>
<dbReference type="EMBL" id="AB023032">
    <property type="protein sequence ID" value="BAB10196.1"/>
    <property type="molecule type" value="Genomic_DNA"/>
</dbReference>
<dbReference type="EMBL" id="CP002688">
    <property type="protein sequence ID" value="AED94783.1"/>
    <property type="molecule type" value="Genomic_DNA"/>
</dbReference>
<dbReference type="EMBL" id="CP002688">
    <property type="protein sequence ID" value="ANM70035.1"/>
    <property type="molecule type" value="Genomic_DNA"/>
</dbReference>
<dbReference type="EMBL" id="BT002948">
    <property type="protein sequence ID" value="AAO22761.1"/>
    <property type="molecule type" value="mRNA"/>
</dbReference>
<dbReference type="EMBL" id="BT004386">
    <property type="protein sequence ID" value="AAO42380.1"/>
    <property type="molecule type" value="mRNA"/>
</dbReference>
<dbReference type="RefSeq" id="NP_001318730.1">
    <property type="nucleotide sequence ID" value="NM_001344440.1"/>
</dbReference>
<dbReference type="RefSeq" id="NP_199038.1">
    <property type="nucleotide sequence ID" value="NM_123588.4"/>
</dbReference>
<dbReference type="SMR" id="Q9FH06"/>
<dbReference type="STRING" id="3702.Q9FH06"/>
<dbReference type="ESTHER" id="arath-SCP41">
    <property type="family name" value="Carboxypeptidase_S10"/>
</dbReference>
<dbReference type="MEROPS" id="S10.A22"/>
<dbReference type="GlyCosmos" id="Q9FH06">
    <property type="glycosylation" value="5 sites, No reported glycans"/>
</dbReference>
<dbReference type="GlyGen" id="Q9FH06">
    <property type="glycosylation" value="5 sites"/>
</dbReference>
<dbReference type="PaxDb" id="3702-AT5G42230.1"/>
<dbReference type="ProteomicsDB" id="232771"/>
<dbReference type="EnsemblPlants" id="AT5G42230.1">
    <property type="protein sequence ID" value="AT5G42230.1"/>
    <property type="gene ID" value="AT5G42230"/>
</dbReference>
<dbReference type="EnsemblPlants" id="AT5G42230.2">
    <property type="protein sequence ID" value="AT5G42230.2"/>
    <property type="gene ID" value="AT5G42230"/>
</dbReference>
<dbReference type="GeneID" id="834228"/>
<dbReference type="Gramene" id="AT5G42230.1">
    <property type="protein sequence ID" value="AT5G42230.1"/>
    <property type="gene ID" value="AT5G42230"/>
</dbReference>
<dbReference type="Gramene" id="AT5G42230.2">
    <property type="protein sequence ID" value="AT5G42230.2"/>
    <property type="gene ID" value="AT5G42230"/>
</dbReference>
<dbReference type="KEGG" id="ath:AT5G42230"/>
<dbReference type="Araport" id="AT5G42230"/>
<dbReference type="TAIR" id="AT5G42230">
    <property type="gene designation" value="SCPL41"/>
</dbReference>
<dbReference type="eggNOG" id="KOG1282">
    <property type="taxonomic scope" value="Eukaryota"/>
</dbReference>
<dbReference type="HOGENOM" id="CLU_008523_13_1_1"/>
<dbReference type="InParanoid" id="Q9FH06"/>
<dbReference type="OMA" id="WATQYGN"/>
<dbReference type="PhylomeDB" id="Q9FH06"/>
<dbReference type="PRO" id="PR:Q9FH06"/>
<dbReference type="Proteomes" id="UP000006548">
    <property type="component" value="Chromosome 5"/>
</dbReference>
<dbReference type="ExpressionAtlas" id="Q9FH06">
    <property type="expression patterns" value="baseline and differential"/>
</dbReference>
<dbReference type="GO" id="GO:0005576">
    <property type="term" value="C:extracellular region"/>
    <property type="evidence" value="ECO:0007669"/>
    <property type="project" value="UniProtKB-SubCell"/>
</dbReference>
<dbReference type="GO" id="GO:0004185">
    <property type="term" value="F:serine-type carboxypeptidase activity"/>
    <property type="evidence" value="ECO:0007669"/>
    <property type="project" value="InterPro"/>
</dbReference>
<dbReference type="GO" id="GO:0006508">
    <property type="term" value="P:proteolysis"/>
    <property type="evidence" value="ECO:0007669"/>
    <property type="project" value="UniProtKB-KW"/>
</dbReference>
<dbReference type="FunFam" id="3.40.50.11320:FF:000005">
    <property type="entry name" value="Carboxypeptidase"/>
    <property type="match status" value="1"/>
</dbReference>
<dbReference type="FunFam" id="3.40.50.1820:FF:000030">
    <property type="entry name" value="Carboxypeptidase"/>
    <property type="match status" value="1"/>
</dbReference>
<dbReference type="Gene3D" id="3.40.50.11320">
    <property type="match status" value="1"/>
</dbReference>
<dbReference type="Gene3D" id="6.10.250.940">
    <property type="match status" value="1"/>
</dbReference>
<dbReference type="Gene3D" id="3.40.50.1820">
    <property type="entry name" value="alpha/beta hydrolase"/>
    <property type="match status" value="1"/>
</dbReference>
<dbReference type="InterPro" id="IPR029058">
    <property type="entry name" value="AB_hydrolase_fold"/>
</dbReference>
<dbReference type="InterPro" id="IPR001563">
    <property type="entry name" value="Peptidase_S10"/>
</dbReference>
<dbReference type="InterPro" id="IPR018202">
    <property type="entry name" value="Ser_caboxypep_ser_AS"/>
</dbReference>
<dbReference type="PANTHER" id="PTHR11802:SF20">
    <property type="entry name" value="SERINE CARBOXYPEPTIDASE-LIKE 41-RELATED"/>
    <property type="match status" value="1"/>
</dbReference>
<dbReference type="PANTHER" id="PTHR11802">
    <property type="entry name" value="SERINE PROTEASE FAMILY S10 SERINE CARBOXYPEPTIDASE"/>
    <property type="match status" value="1"/>
</dbReference>
<dbReference type="Pfam" id="PF00450">
    <property type="entry name" value="Peptidase_S10"/>
    <property type="match status" value="1"/>
</dbReference>
<dbReference type="PRINTS" id="PR00724">
    <property type="entry name" value="CRBOXYPTASEC"/>
</dbReference>
<dbReference type="SUPFAM" id="SSF53474">
    <property type="entry name" value="alpha/beta-Hydrolases"/>
    <property type="match status" value="1"/>
</dbReference>
<dbReference type="PROSITE" id="PS00131">
    <property type="entry name" value="CARBOXYPEPT_SER_SER"/>
    <property type="match status" value="1"/>
</dbReference>
<sequence>MAIVSLRDVAMVMVTVQVFARGYPETDLVVRLPGQPKVVFRQYAGYVDLDLNAGRSLFYYFVEAEKHPDTKPLTLWLNGGPGCSSVGGGAFTELGPFYPTGYGRGLRINSMSWNKASNLLFVDSPAGVGWSYSNRSSDYNAGDKSAASDMLVFLLRWFDKFPELKSHDLFLTGESYAGHYIPQLADAILSYNSRSSGFKFNIKGIAIGNPLLKLDRDIPAVYEFFWSHGMISEVVGRTIKIQCDFSHYTYAYPHNVSDACNDAIREAGDITTEYVNTFDVLPDLCYPSIALQELRLKQMATKMSMGVDVCMNYERQFYLNIPEVQMALHANRTNLPYSWSLCSNLLNYSAIDVNTNMLPTLKRIIQNKIPVRIFSGDQDSVVPFLGTRTIVGELANDLNFKTTVPYGVWFHKRQVGGWAIEYGNLLTFATVRGAAHAVAYTQPSRALHLFSTFLRGQRLPNKTDIAMHD</sequence>
<proteinExistence type="evidence at transcript level"/>